<name>RUVB_BURP1</name>
<feature type="chain" id="PRO_0000235353" description="Holliday junction branch migration complex subunit RuvB">
    <location>
        <begin position="1"/>
        <end position="356"/>
    </location>
</feature>
<feature type="region of interest" description="Large ATPase domain (RuvB-L)" evidence="1">
    <location>
        <begin position="4"/>
        <end position="190"/>
    </location>
</feature>
<feature type="region of interest" description="Small ATPAse domain (RuvB-S)" evidence="1">
    <location>
        <begin position="191"/>
        <end position="261"/>
    </location>
</feature>
<feature type="region of interest" description="Head domain (RuvB-H)" evidence="1">
    <location>
        <begin position="264"/>
        <end position="356"/>
    </location>
</feature>
<feature type="binding site" evidence="1">
    <location>
        <position position="29"/>
    </location>
    <ligand>
        <name>ATP</name>
        <dbReference type="ChEBI" id="CHEBI:30616"/>
    </ligand>
</feature>
<feature type="binding site" evidence="1">
    <location>
        <position position="30"/>
    </location>
    <ligand>
        <name>ATP</name>
        <dbReference type="ChEBI" id="CHEBI:30616"/>
    </ligand>
</feature>
<feature type="binding site" evidence="1">
    <location>
        <position position="71"/>
    </location>
    <ligand>
        <name>ATP</name>
        <dbReference type="ChEBI" id="CHEBI:30616"/>
    </ligand>
</feature>
<feature type="binding site" evidence="1">
    <location>
        <position position="74"/>
    </location>
    <ligand>
        <name>ATP</name>
        <dbReference type="ChEBI" id="CHEBI:30616"/>
    </ligand>
</feature>
<feature type="binding site" evidence="1">
    <location>
        <position position="75"/>
    </location>
    <ligand>
        <name>ATP</name>
        <dbReference type="ChEBI" id="CHEBI:30616"/>
    </ligand>
</feature>
<feature type="binding site" evidence="1">
    <location>
        <position position="75"/>
    </location>
    <ligand>
        <name>Mg(2+)</name>
        <dbReference type="ChEBI" id="CHEBI:18420"/>
    </ligand>
</feature>
<feature type="binding site" evidence="1">
    <location>
        <position position="76"/>
    </location>
    <ligand>
        <name>ATP</name>
        <dbReference type="ChEBI" id="CHEBI:30616"/>
    </ligand>
</feature>
<feature type="binding site" evidence="1">
    <location>
        <begin position="137"/>
        <end position="139"/>
    </location>
    <ligand>
        <name>ATP</name>
        <dbReference type="ChEBI" id="CHEBI:30616"/>
    </ligand>
</feature>
<feature type="binding site" evidence="1">
    <location>
        <position position="180"/>
    </location>
    <ligand>
        <name>ATP</name>
        <dbReference type="ChEBI" id="CHEBI:30616"/>
    </ligand>
</feature>
<feature type="binding site" evidence="1">
    <location>
        <position position="190"/>
    </location>
    <ligand>
        <name>ATP</name>
        <dbReference type="ChEBI" id="CHEBI:30616"/>
    </ligand>
</feature>
<feature type="binding site" evidence="1">
    <location>
        <position position="227"/>
    </location>
    <ligand>
        <name>ATP</name>
        <dbReference type="ChEBI" id="CHEBI:30616"/>
    </ligand>
</feature>
<feature type="binding site" evidence="1">
    <location>
        <position position="300"/>
    </location>
    <ligand>
        <name>DNA</name>
        <dbReference type="ChEBI" id="CHEBI:16991"/>
    </ligand>
</feature>
<feature type="binding site" evidence="1">
    <location>
        <position position="319"/>
    </location>
    <ligand>
        <name>DNA</name>
        <dbReference type="ChEBI" id="CHEBI:16991"/>
    </ligand>
</feature>
<feature type="binding site" evidence="1">
    <location>
        <position position="324"/>
    </location>
    <ligand>
        <name>DNA</name>
        <dbReference type="ChEBI" id="CHEBI:16991"/>
    </ligand>
</feature>
<reference key="1">
    <citation type="journal article" date="2010" name="Genome Biol. Evol.">
        <title>Continuing evolution of Burkholderia mallei through genome reduction and large-scale rearrangements.</title>
        <authorList>
            <person name="Losada L."/>
            <person name="Ronning C.M."/>
            <person name="DeShazer D."/>
            <person name="Woods D."/>
            <person name="Fedorova N."/>
            <person name="Kim H.S."/>
            <person name="Shabalina S.A."/>
            <person name="Pearson T.R."/>
            <person name="Brinkac L."/>
            <person name="Tan P."/>
            <person name="Nandi T."/>
            <person name="Crabtree J."/>
            <person name="Badger J."/>
            <person name="Beckstrom-Sternberg S."/>
            <person name="Saqib M."/>
            <person name="Schutzer S.E."/>
            <person name="Keim P."/>
            <person name="Nierman W.C."/>
        </authorList>
    </citation>
    <scope>NUCLEOTIDE SEQUENCE [LARGE SCALE GENOMIC DNA]</scope>
    <source>
        <strain>1710b</strain>
    </source>
</reference>
<gene>
    <name evidence="1" type="primary">ruvB</name>
    <name type="ordered locus">BURPS1710b_3407</name>
</gene>
<comment type="function">
    <text evidence="1">The RuvA-RuvB-RuvC complex processes Holliday junction (HJ) DNA during genetic recombination and DNA repair, while the RuvA-RuvB complex plays an important role in the rescue of blocked DNA replication forks via replication fork reversal (RFR). RuvA specifically binds to HJ cruciform DNA, conferring on it an open structure. The RuvB hexamer acts as an ATP-dependent pump, pulling dsDNA into and through the RuvAB complex. RuvB forms 2 homohexamers on either side of HJ DNA bound by 1 or 2 RuvA tetramers; 4 subunits per hexamer contact DNA at a time. Coordinated motions by a converter formed by DNA-disengaged RuvB subunits stimulates ATP hydrolysis and nucleotide exchange. Immobilization of the converter enables RuvB to convert the ATP-contained energy into a lever motion, pulling 2 nucleotides of DNA out of the RuvA tetramer per ATP hydrolyzed, thus driving DNA branch migration. The RuvB motors rotate together with the DNA substrate, which together with the progressing nucleotide cycle form the mechanistic basis for DNA recombination by continuous HJ branch migration. Branch migration allows RuvC to scan DNA until it finds its consensus sequence, where it cleaves and resolves cruciform DNA.</text>
</comment>
<comment type="catalytic activity">
    <reaction evidence="1">
        <text>ATP + H2O = ADP + phosphate + H(+)</text>
        <dbReference type="Rhea" id="RHEA:13065"/>
        <dbReference type="ChEBI" id="CHEBI:15377"/>
        <dbReference type="ChEBI" id="CHEBI:15378"/>
        <dbReference type="ChEBI" id="CHEBI:30616"/>
        <dbReference type="ChEBI" id="CHEBI:43474"/>
        <dbReference type="ChEBI" id="CHEBI:456216"/>
    </reaction>
</comment>
<comment type="subunit">
    <text evidence="1">Homohexamer. Forms an RuvA(8)-RuvB(12)-Holliday junction (HJ) complex. HJ DNA is sandwiched between 2 RuvA tetramers; dsDNA enters through RuvA and exits via RuvB. An RuvB hexamer assembles on each DNA strand where it exits the tetramer. Each RuvB hexamer is contacted by two RuvA subunits (via domain III) on 2 adjacent RuvB subunits; this complex drives branch migration. In the full resolvosome a probable DNA-RuvA(4)-RuvB(12)-RuvC(2) complex forms which resolves the HJ.</text>
</comment>
<comment type="subcellular location">
    <subcellularLocation>
        <location evidence="1">Cytoplasm</location>
    </subcellularLocation>
</comment>
<comment type="domain">
    <text evidence="1">Has 3 domains, the large (RuvB-L) and small ATPase (RuvB-S) domains and the C-terminal head (RuvB-H) domain. The head domain binds DNA, while the ATPase domains jointly bind ATP, ADP or are empty depending on the state of the subunit in the translocation cycle. During a single DNA translocation step the structure of each domain remains the same, but their relative positions change.</text>
</comment>
<comment type="similarity">
    <text evidence="1">Belongs to the RuvB family.</text>
</comment>
<keyword id="KW-0067">ATP-binding</keyword>
<keyword id="KW-0963">Cytoplasm</keyword>
<keyword id="KW-0227">DNA damage</keyword>
<keyword id="KW-0233">DNA recombination</keyword>
<keyword id="KW-0234">DNA repair</keyword>
<keyword id="KW-0238">DNA-binding</keyword>
<keyword id="KW-0378">Hydrolase</keyword>
<keyword id="KW-0547">Nucleotide-binding</keyword>
<dbReference type="EC" id="3.6.4.-" evidence="1"/>
<dbReference type="EMBL" id="CP000124">
    <property type="protein sequence ID" value="ABA47868.1"/>
    <property type="molecule type" value="Genomic_DNA"/>
</dbReference>
<dbReference type="RefSeq" id="WP_004194268.1">
    <property type="nucleotide sequence ID" value="NC_007434.1"/>
</dbReference>
<dbReference type="SMR" id="Q3JNS5"/>
<dbReference type="EnsemblBacteria" id="ABA47868">
    <property type="protein sequence ID" value="ABA47868"/>
    <property type="gene ID" value="BURPS1710b_3407"/>
</dbReference>
<dbReference type="GeneID" id="93061494"/>
<dbReference type="KEGG" id="bpm:BURPS1710b_3407"/>
<dbReference type="HOGENOM" id="CLU_055599_1_0_4"/>
<dbReference type="Proteomes" id="UP000002700">
    <property type="component" value="Chromosome I"/>
</dbReference>
<dbReference type="GO" id="GO:0005737">
    <property type="term" value="C:cytoplasm"/>
    <property type="evidence" value="ECO:0007669"/>
    <property type="project" value="UniProtKB-SubCell"/>
</dbReference>
<dbReference type="GO" id="GO:0048476">
    <property type="term" value="C:Holliday junction resolvase complex"/>
    <property type="evidence" value="ECO:0007669"/>
    <property type="project" value="UniProtKB-UniRule"/>
</dbReference>
<dbReference type="GO" id="GO:0005524">
    <property type="term" value="F:ATP binding"/>
    <property type="evidence" value="ECO:0007669"/>
    <property type="project" value="UniProtKB-UniRule"/>
</dbReference>
<dbReference type="GO" id="GO:0016887">
    <property type="term" value="F:ATP hydrolysis activity"/>
    <property type="evidence" value="ECO:0007669"/>
    <property type="project" value="InterPro"/>
</dbReference>
<dbReference type="GO" id="GO:0000400">
    <property type="term" value="F:four-way junction DNA binding"/>
    <property type="evidence" value="ECO:0007669"/>
    <property type="project" value="UniProtKB-UniRule"/>
</dbReference>
<dbReference type="GO" id="GO:0009378">
    <property type="term" value="F:four-way junction helicase activity"/>
    <property type="evidence" value="ECO:0007669"/>
    <property type="project" value="InterPro"/>
</dbReference>
<dbReference type="GO" id="GO:0006310">
    <property type="term" value="P:DNA recombination"/>
    <property type="evidence" value="ECO:0007669"/>
    <property type="project" value="UniProtKB-UniRule"/>
</dbReference>
<dbReference type="GO" id="GO:0006281">
    <property type="term" value="P:DNA repair"/>
    <property type="evidence" value="ECO:0007669"/>
    <property type="project" value="UniProtKB-UniRule"/>
</dbReference>
<dbReference type="CDD" id="cd00009">
    <property type="entry name" value="AAA"/>
    <property type="match status" value="1"/>
</dbReference>
<dbReference type="FunFam" id="1.10.10.10:FF:000086">
    <property type="entry name" value="Holliday junction ATP-dependent DNA helicase RuvB"/>
    <property type="match status" value="1"/>
</dbReference>
<dbReference type="FunFam" id="3.40.50.300:FF:000073">
    <property type="entry name" value="Holliday junction ATP-dependent DNA helicase RuvB"/>
    <property type="match status" value="1"/>
</dbReference>
<dbReference type="Gene3D" id="1.10.8.60">
    <property type="match status" value="1"/>
</dbReference>
<dbReference type="Gene3D" id="3.40.50.300">
    <property type="entry name" value="P-loop containing nucleotide triphosphate hydrolases"/>
    <property type="match status" value="1"/>
</dbReference>
<dbReference type="Gene3D" id="1.10.10.10">
    <property type="entry name" value="Winged helix-like DNA-binding domain superfamily/Winged helix DNA-binding domain"/>
    <property type="match status" value="1"/>
</dbReference>
<dbReference type="HAMAP" id="MF_00016">
    <property type="entry name" value="DNA_HJ_migration_RuvB"/>
    <property type="match status" value="1"/>
</dbReference>
<dbReference type="InterPro" id="IPR003593">
    <property type="entry name" value="AAA+_ATPase"/>
</dbReference>
<dbReference type="InterPro" id="IPR041445">
    <property type="entry name" value="AAA_lid_4"/>
</dbReference>
<dbReference type="InterPro" id="IPR004605">
    <property type="entry name" value="DNA_helicase_Holl-junc_RuvB"/>
</dbReference>
<dbReference type="InterPro" id="IPR027417">
    <property type="entry name" value="P-loop_NTPase"/>
</dbReference>
<dbReference type="InterPro" id="IPR008824">
    <property type="entry name" value="RuvB-like_N"/>
</dbReference>
<dbReference type="InterPro" id="IPR008823">
    <property type="entry name" value="RuvB_C"/>
</dbReference>
<dbReference type="InterPro" id="IPR036388">
    <property type="entry name" value="WH-like_DNA-bd_sf"/>
</dbReference>
<dbReference type="InterPro" id="IPR036390">
    <property type="entry name" value="WH_DNA-bd_sf"/>
</dbReference>
<dbReference type="NCBIfam" id="NF000868">
    <property type="entry name" value="PRK00080.1"/>
    <property type="match status" value="1"/>
</dbReference>
<dbReference type="NCBIfam" id="TIGR00635">
    <property type="entry name" value="ruvB"/>
    <property type="match status" value="1"/>
</dbReference>
<dbReference type="PANTHER" id="PTHR42848">
    <property type="match status" value="1"/>
</dbReference>
<dbReference type="PANTHER" id="PTHR42848:SF1">
    <property type="entry name" value="HOLLIDAY JUNCTION BRANCH MIGRATION COMPLEX SUBUNIT RUVB"/>
    <property type="match status" value="1"/>
</dbReference>
<dbReference type="Pfam" id="PF17864">
    <property type="entry name" value="AAA_lid_4"/>
    <property type="match status" value="1"/>
</dbReference>
<dbReference type="Pfam" id="PF05491">
    <property type="entry name" value="RuvB_C"/>
    <property type="match status" value="1"/>
</dbReference>
<dbReference type="Pfam" id="PF05496">
    <property type="entry name" value="RuvB_N"/>
    <property type="match status" value="1"/>
</dbReference>
<dbReference type="SMART" id="SM00382">
    <property type="entry name" value="AAA"/>
    <property type="match status" value="1"/>
</dbReference>
<dbReference type="SUPFAM" id="SSF52540">
    <property type="entry name" value="P-loop containing nucleoside triphosphate hydrolases"/>
    <property type="match status" value="1"/>
</dbReference>
<dbReference type="SUPFAM" id="SSF46785">
    <property type="entry name" value="Winged helix' DNA-binding domain"/>
    <property type="match status" value="1"/>
</dbReference>
<proteinExistence type="inferred from homology"/>
<accession>Q3JNS5</accession>
<organism>
    <name type="scientific">Burkholderia pseudomallei (strain 1710b)</name>
    <dbReference type="NCBI Taxonomy" id="320372"/>
    <lineage>
        <taxon>Bacteria</taxon>
        <taxon>Pseudomonadati</taxon>
        <taxon>Pseudomonadota</taxon>
        <taxon>Betaproteobacteria</taxon>
        <taxon>Burkholderiales</taxon>
        <taxon>Burkholderiaceae</taxon>
        <taxon>Burkholderia</taxon>
        <taxon>pseudomallei group</taxon>
    </lineage>
</organism>
<protein>
    <recommendedName>
        <fullName evidence="1">Holliday junction branch migration complex subunit RuvB</fullName>
        <ecNumber evidence="1">3.6.4.-</ecNumber>
    </recommendedName>
</protein>
<evidence type="ECO:0000255" key="1">
    <source>
        <dbReference type="HAMAP-Rule" id="MF_00016"/>
    </source>
</evidence>
<sequence>MIETDKLAAERIIAATPASSHEEAFERALRPRQLDEYVGQEKVRDQLEIFIEAAKRRSEALDHVLLFGPPGLGKTTLAHIIAREMGVNLRQTSGPVLERAGDLAALLTNLEANDVLFIDEIHRLSPVVEEILYPALEDYQIDIMIGEGPAARSVKLDLQPFTLVGATTRAGMLTNPLRDRFGIVARLEFYDAEQLSRIVRRSAALLNAQIDPAGALEIAKRSRGTPRIANRLLRRVRDYAEVKADGNITAAVADAALAMLDVDPVGFDLMDRKLLEAILHKFDGGPVGVDNLAAAIGEERDTIEDVLEPYLIQQGFLQRTPRGRVATLLTYRHFGLSAPDAANPVRNLWDTPDAEC</sequence>